<name>SYDND_GEODF</name>
<protein>
    <recommendedName>
        <fullName evidence="1">Aspartate--tRNA(Asp/Asn) ligase</fullName>
        <ecNumber evidence="1">6.1.1.23</ecNumber>
    </recommendedName>
    <alternativeName>
        <fullName evidence="1">Aspartyl-tRNA synthetase</fullName>
        <shortName evidence="1">AspRS</shortName>
    </alternativeName>
    <alternativeName>
        <fullName evidence="1">Non-discriminating aspartyl-tRNA synthetase</fullName>
        <shortName evidence="1">ND-AspRS</shortName>
    </alternativeName>
</protein>
<feature type="chain" id="PRO_1000198991" description="Aspartate--tRNA(Asp/Asn) ligase">
    <location>
        <begin position="1"/>
        <end position="593"/>
    </location>
</feature>
<feature type="region of interest" description="Aspartate" evidence="1">
    <location>
        <begin position="206"/>
        <end position="209"/>
    </location>
</feature>
<feature type="binding site" evidence="1">
    <location>
        <position position="182"/>
    </location>
    <ligand>
        <name>L-aspartate</name>
        <dbReference type="ChEBI" id="CHEBI:29991"/>
    </ligand>
</feature>
<feature type="binding site" evidence="1">
    <location>
        <begin position="228"/>
        <end position="230"/>
    </location>
    <ligand>
        <name>ATP</name>
        <dbReference type="ChEBI" id="CHEBI:30616"/>
    </ligand>
</feature>
<feature type="binding site" evidence="1">
    <location>
        <position position="228"/>
    </location>
    <ligand>
        <name>L-aspartate</name>
        <dbReference type="ChEBI" id="CHEBI:29991"/>
    </ligand>
</feature>
<feature type="binding site" evidence="1">
    <location>
        <position position="237"/>
    </location>
    <ligand>
        <name>ATP</name>
        <dbReference type="ChEBI" id="CHEBI:30616"/>
    </ligand>
</feature>
<feature type="binding site" evidence="1">
    <location>
        <position position="455"/>
    </location>
    <ligand>
        <name>L-aspartate</name>
        <dbReference type="ChEBI" id="CHEBI:29991"/>
    </ligand>
</feature>
<feature type="binding site" evidence="1">
    <location>
        <position position="489"/>
    </location>
    <ligand>
        <name>ATP</name>
        <dbReference type="ChEBI" id="CHEBI:30616"/>
    </ligand>
</feature>
<feature type="binding site" evidence="1">
    <location>
        <position position="496"/>
    </location>
    <ligand>
        <name>L-aspartate</name>
        <dbReference type="ChEBI" id="CHEBI:29991"/>
    </ligand>
</feature>
<feature type="binding site" evidence="1">
    <location>
        <begin position="541"/>
        <end position="544"/>
    </location>
    <ligand>
        <name>ATP</name>
        <dbReference type="ChEBI" id="CHEBI:30616"/>
    </ligand>
</feature>
<feature type="site" description="Important for tRNA non-discrimination" evidence="1">
    <location>
        <position position="38"/>
    </location>
</feature>
<feature type="site" description="Important for tRNA non-discrimination" evidence="1">
    <location>
        <position position="90"/>
    </location>
</feature>
<accession>B9M1C9</accession>
<comment type="function">
    <text evidence="1">Aspartyl-tRNA synthetase with relaxed tRNA specificity since it is able to aspartylate not only its cognate tRNA(Asp) but also tRNA(Asn). Reaction proceeds in two steps: L-aspartate is first activated by ATP to form Asp-AMP and then transferred to the acceptor end of tRNA(Asp/Asn).</text>
</comment>
<comment type="catalytic activity">
    <reaction evidence="1">
        <text>tRNA(Asx) + L-aspartate + ATP = L-aspartyl-tRNA(Asx) + AMP + diphosphate</text>
        <dbReference type="Rhea" id="RHEA:18349"/>
        <dbReference type="Rhea" id="RHEA-COMP:9710"/>
        <dbReference type="Rhea" id="RHEA-COMP:9711"/>
        <dbReference type="ChEBI" id="CHEBI:29991"/>
        <dbReference type="ChEBI" id="CHEBI:30616"/>
        <dbReference type="ChEBI" id="CHEBI:33019"/>
        <dbReference type="ChEBI" id="CHEBI:78442"/>
        <dbReference type="ChEBI" id="CHEBI:78516"/>
        <dbReference type="ChEBI" id="CHEBI:456215"/>
        <dbReference type="EC" id="6.1.1.23"/>
    </reaction>
</comment>
<comment type="subunit">
    <text evidence="1">Homodimer.</text>
</comment>
<comment type="subcellular location">
    <subcellularLocation>
        <location evidence="1">Cytoplasm</location>
    </subcellularLocation>
</comment>
<comment type="similarity">
    <text evidence="1">Belongs to the class-II aminoacyl-tRNA synthetase family. Type 1 subfamily.</text>
</comment>
<gene>
    <name evidence="1" type="primary">aspS</name>
    <name type="ordered locus">Geob_2661</name>
</gene>
<dbReference type="EC" id="6.1.1.23" evidence="1"/>
<dbReference type="EMBL" id="CP001390">
    <property type="protein sequence ID" value="ACM21011.1"/>
    <property type="molecule type" value="Genomic_DNA"/>
</dbReference>
<dbReference type="RefSeq" id="WP_012647740.1">
    <property type="nucleotide sequence ID" value="NC_011979.1"/>
</dbReference>
<dbReference type="SMR" id="B9M1C9"/>
<dbReference type="STRING" id="316067.Geob_2661"/>
<dbReference type="KEGG" id="geo:Geob_2661"/>
<dbReference type="eggNOG" id="COG0173">
    <property type="taxonomic scope" value="Bacteria"/>
</dbReference>
<dbReference type="HOGENOM" id="CLU_014330_3_2_7"/>
<dbReference type="OrthoDB" id="9802326at2"/>
<dbReference type="Proteomes" id="UP000007721">
    <property type="component" value="Chromosome"/>
</dbReference>
<dbReference type="GO" id="GO:0005737">
    <property type="term" value="C:cytoplasm"/>
    <property type="evidence" value="ECO:0007669"/>
    <property type="project" value="UniProtKB-SubCell"/>
</dbReference>
<dbReference type="GO" id="GO:0004815">
    <property type="term" value="F:aspartate-tRNA ligase activity"/>
    <property type="evidence" value="ECO:0007669"/>
    <property type="project" value="UniProtKB-UniRule"/>
</dbReference>
<dbReference type="GO" id="GO:0050560">
    <property type="term" value="F:aspartate-tRNA(Asn) ligase activity"/>
    <property type="evidence" value="ECO:0007669"/>
    <property type="project" value="UniProtKB-EC"/>
</dbReference>
<dbReference type="GO" id="GO:0005524">
    <property type="term" value="F:ATP binding"/>
    <property type="evidence" value="ECO:0007669"/>
    <property type="project" value="UniProtKB-UniRule"/>
</dbReference>
<dbReference type="GO" id="GO:0003676">
    <property type="term" value="F:nucleic acid binding"/>
    <property type="evidence" value="ECO:0007669"/>
    <property type="project" value="InterPro"/>
</dbReference>
<dbReference type="GO" id="GO:0006422">
    <property type="term" value="P:aspartyl-tRNA aminoacylation"/>
    <property type="evidence" value="ECO:0007669"/>
    <property type="project" value="UniProtKB-UniRule"/>
</dbReference>
<dbReference type="CDD" id="cd00777">
    <property type="entry name" value="AspRS_core"/>
    <property type="match status" value="1"/>
</dbReference>
<dbReference type="CDD" id="cd04317">
    <property type="entry name" value="EcAspRS_like_N"/>
    <property type="match status" value="1"/>
</dbReference>
<dbReference type="Gene3D" id="3.30.930.10">
    <property type="entry name" value="Bira Bifunctional Protein, Domain 2"/>
    <property type="match status" value="1"/>
</dbReference>
<dbReference type="Gene3D" id="3.30.1360.30">
    <property type="entry name" value="GAD-like domain"/>
    <property type="match status" value="1"/>
</dbReference>
<dbReference type="Gene3D" id="2.40.50.140">
    <property type="entry name" value="Nucleic acid-binding proteins"/>
    <property type="match status" value="1"/>
</dbReference>
<dbReference type="HAMAP" id="MF_00044">
    <property type="entry name" value="Asp_tRNA_synth_type1"/>
    <property type="match status" value="1"/>
</dbReference>
<dbReference type="InterPro" id="IPR004364">
    <property type="entry name" value="Aa-tRNA-synt_II"/>
</dbReference>
<dbReference type="InterPro" id="IPR006195">
    <property type="entry name" value="aa-tRNA-synth_II"/>
</dbReference>
<dbReference type="InterPro" id="IPR045864">
    <property type="entry name" value="aa-tRNA-synth_II/BPL/LPL"/>
</dbReference>
<dbReference type="InterPro" id="IPR004524">
    <property type="entry name" value="Asp-tRNA-ligase_1"/>
</dbReference>
<dbReference type="InterPro" id="IPR047089">
    <property type="entry name" value="Asp-tRNA-ligase_1_N"/>
</dbReference>
<dbReference type="InterPro" id="IPR002312">
    <property type="entry name" value="Asp/Asn-tRNA-synth_IIb"/>
</dbReference>
<dbReference type="InterPro" id="IPR047090">
    <property type="entry name" value="AspRS_core"/>
</dbReference>
<dbReference type="InterPro" id="IPR004115">
    <property type="entry name" value="GAD-like_sf"/>
</dbReference>
<dbReference type="InterPro" id="IPR029351">
    <property type="entry name" value="GAD_dom"/>
</dbReference>
<dbReference type="InterPro" id="IPR012340">
    <property type="entry name" value="NA-bd_OB-fold"/>
</dbReference>
<dbReference type="InterPro" id="IPR004365">
    <property type="entry name" value="NA-bd_OB_tRNA"/>
</dbReference>
<dbReference type="NCBIfam" id="TIGR00459">
    <property type="entry name" value="aspS_bact"/>
    <property type="match status" value="1"/>
</dbReference>
<dbReference type="NCBIfam" id="NF001750">
    <property type="entry name" value="PRK00476.1"/>
    <property type="match status" value="1"/>
</dbReference>
<dbReference type="PANTHER" id="PTHR22594:SF5">
    <property type="entry name" value="ASPARTATE--TRNA LIGASE, MITOCHONDRIAL"/>
    <property type="match status" value="1"/>
</dbReference>
<dbReference type="PANTHER" id="PTHR22594">
    <property type="entry name" value="ASPARTYL/LYSYL-TRNA SYNTHETASE"/>
    <property type="match status" value="1"/>
</dbReference>
<dbReference type="Pfam" id="PF02938">
    <property type="entry name" value="GAD"/>
    <property type="match status" value="1"/>
</dbReference>
<dbReference type="Pfam" id="PF00152">
    <property type="entry name" value="tRNA-synt_2"/>
    <property type="match status" value="1"/>
</dbReference>
<dbReference type="Pfam" id="PF01336">
    <property type="entry name" value="tRNA_anti-codon"/>
    <property type="match status" value="1"/>
</dbReference>
<dbReference type="PRINTS" id="PR01042">
    <property type="entry name" value="TRNASYNTHASP"/>
</dbReference>
<dbReference type="SUPFAM" id="SSF55681">
    <property type="entry name" value="Class II aaRS and biotin synthetases"/>
    <property type="match status" value="1"/>
</dbReference>
<dbReference type="SUPFAM" id="SSF55261">
    <property type="entry name" value="GAD domain-like"/>
    <property type="match status" value="1"/>
</dbReference>
<dbReference type="SUPFAM" id="SSF50249">
    <property type="entry name" value="Nucleic acid-binding proteins"/>
    <property type="match status" value="1"/>
</dbReference>
<dbReference type="PROSITE" id="PS50862">
    <property type="entry name" value="AA_TRNA_LIGASE_II"/>
    <property type="match status" value="1"/>
</dbReference>
<sequence>MIDFLGDWKRTHYCGTLTADDTGKEVVLMGWAHRRRDHGGLIFVDLRDREGLAQIVFDPDNSAEAHHKAEAIRNEYVVAVKGKVIPRPQGTVNTNLRTGAVEILVSACKILSRSKALPFTLDDYVDVAENLRLKHRYLDLRRPVLQDNLILRSKVAQVTRQYLTGNGFLELETPFLTKSTPEGARDFLVPSRINRGEFYALPQSPQLFKQILMISGFDRYFQIVRCFRDEDLRADRQPEFTQIDCEMSFIDREDIITVMEGLIARIFADVKDMSVSLPIKRMTYAESINRFGVDNPDLRFGLELVELSDIVKGSGFKVFADVVAGGGIVKGLNAKGCGGMSRKEIDDLTEFVKIYGAKGLAYVKVTEDGWQSPITKFFTGEEISAMTKTFAAEQGDLLLFVADKPKVVNDSLGKLRNQLAKILGLLDKNTFNFVWITDFPLLEWDEEEKRWAAVHHPFTAPMDEDLEYVENDPGRCRAKAYDLVLNGNEIGGGSIRIHQEKVQSLMFKMLGLSEEDAKAKFGFLLDALEYGTPPHGGIAFGLDRLIMLLTGSDSIRDVIAFPKTQKGACLMSEAPSPVDLKQLRELGLKTTGK</sequence>
<keyword id="KW-0030">Aminoacyl-tRNA synthetase</keyword>
<keyword id="KW-0067">ATP-binding</keyword>
<keyword id="KW-0963">Cytoplasm</keyword>
<keyword id="KW-0436">Ligase</keyword>
<keyword id="KW-0547">Nucleotide-binding</keyword>
<keyword id="KW-0648">Protein biosynthesis</keyword>
<keyword id="KW-1185">Reference proteome</keyword>
<evidence type="ECO:0000255" key="1">
    <source>
        <dbReference type="HAMAP-Rule" id="MF_00044"/>
    </source>
</evidence>
<reference key="1">
    <citation type="submission" date="2009-01" db="EMBL/GenBank/DDBJ databases">
        <title>Complete sequence of Geobacter sp. FRC-32.</title>
        <authorList>
            <consortium name="US DOE Joint Genome Institute"/>
            <person name="Lucas S."/>
            <person name="Copeland A."/>
            <person name="Lapidus A."/>
            <person name="Glavina del Rio T."/>
            <person name="Dalin E."/>
            <person name="Tice H."/>
            <person name="Bruce D."/>
            <person name="Goodwin L."/>
            <person name="Pitluck S."/>
            <person name="Saunders E."/>
            <person name="Brettin T."/>
            <person name="Detter J.C."/>
            <person name="Han C."/>
            <person name="Larimer F."/>
            <person name="Land M."/>
            <person name="Hauser L."/>
            <person name="Kyrpides N."/>
            <person name="Ovchinnikova G."/>
            <person name="Kostka J."/>
            <person name="Richardson P."/>
        </authorList>
    </citation>
    <scope>NUCLEOTIDE SEQUENCE [LARGE SCALE GENOMIC DNA]</scope>
    <source>
        <strain>DSM 22248 / JCM 15807 / FRC-32</strain>
    </source>
</reference>
<organism>
    <name type="scientific">Geotalea daltonii (strain DSM 22248 / JCM 15807 / FRC-32)</name>
    <name type="common">Geobacter daltonii</name>
    <dbReference type="NCBI Taxonomy" id="316067"/>
    <lineage>
        <taxon>Bacteria</taxon>
        <taxon>Pseudomonadati</taxon>
        <taxon>Thermodesulfobacteriota</taxon>
        <taxon>Desulfuromonadia</taxon>
        <taxon>Geobacterales</taxon>
        <taxon>Geobacteraceae</taxon>
        <taxon>Geotalea</taxon>
    </lineage>
</organism>
<proteinExistence type="inferred from homology"/>